<proteinExistence type="inferred from homology"/>
<gene>
    <name evidence="1" type="primary">glpE</name>
    <name type="ordered locus">PLES_05861</name>
</gene>
<comment type="function">
    <text evidence="1">Transferase that catalyzes the transfer of sulfur from thiosulfate to thiophilic acceptors such as cyanide or dithiols. May function in a CysM-independent thiosulfate assimilation pathway by catalyzing the conversion of thiosulfate to sulfite, which can then be used for L-cysteine biosynthesis.</text>
</comment>
<comment type="catalytic activity">
    <reaction evidence="1">
        <text>thiosulfate + hydrogen cyanide = thiocyanate + sulfite + 2 H(+)</text>
        <dbReference type="Rhea" id="RHEA:16881"/>
        <dbReference type="ChEBI" id="CHEBI:15378"/>
        <dbReference type="ChEBI" id="CHEBI:17359"/>
        <dbReference type="ChEBI" id="CHEBI:18022"/>
        <dbReference type="ChEBI" id="CHEBI:18407"/>
        <dbReference type="ChEBI" id="CHEBI:33542"/>
        <dbReference type="EC" id="2.8.1.1"/>
    </reaction>
</comment>
<comment type="catalytic activity">
    <reaction evidence="1">
        <text>thiosulfate + [thioredoxin]-dithiol = [thioredoxin]-disulfide + hydrogen sulfide + sulfite + 2 H(+)</text>
        <dbReference type="Rhea" id="RHEA:83859"/>
        <dbReference type="Rhea" id="RHEA-COMP:10698"/>
        <dbReference type="Rhea" id="RHEA-COMP:10700"/>
        <dbReference type="ChEBI" id="CHEBI:15378"/>
        <dbReference type="ChEBI" id="CHEBI:17359"/>
        <dbReference type="ChEBI" id="CHEBI:29919"/>
        <dbReference type="ChEBI" id="CHEBI:29950"/>
        <dbReference type="ChEBI" id="CHEBI:33542"/>
        <dbReference type="ChEBI" id="CHEBI:50058"/>
    </reaction>
</comment>
<comment type="subcellular location">
    <subcellularLocation>
        <location evidence="1">Cytoplasm</location>
    </subcellularLocation>
</comment>
<comment type="similarity">
    <text evidence="1">Belongs to the GlpE family.</text>
</comment>
<feature type="chain" id="PRO_1000190102" description="Thiosulfate sulfurtransferase GlpE">
    <location>
        <begin position="1"/>
        <end position="110"/>
    </location>
</feature>
<feature type="domain" description="Rhodanese" evidence="1">
    <location>
        <begin position="17"/>
        <end position="105"/>
    </location>
</feature>
<feature type="active site" description="Cysteine persulfide intermediate" evidence="1">
    <location>
        <position position="65"/>
    </location>
</feature>
<dbReference type="EC" id="2.8.1.1" evidence="1"/>
<dbReference type="EMBL" id="FM209186">
    <property type="protein sequence ID" value="CAW25313.1"/>
    <property type="molecule type" value="Genomic_DNA"/>
</dbReference>
<dbReference type="RefSeq" id="WP_003099577.1">
    <property type="nucleotide sequence ID" value="NC_011770.1"/>
</dbReference>
<dbReference type="SMR" id="B7V4H5"/>
<dbReference type="KEGG" id="pag:PLES_05861"/>
<dbReference type="HOGENOM" id="CLU_089574_14_0_6"/>
<dbReference type="GO" id="GO:0005737">
    <property type="term" value="C:cytoplasm"/>
    <property type="evidence" value="ECO:0007669"/>
    <property type="project" value="UniProtKB-SubCell"/>
</dbReference>
<dbReference type="GO" id="GO:0004792">
    <property type="term" value="F:thiosulfate-cyanide sulfurtransferase activity"/>
    <property type="evidence" value="ECO:0007669"/>
    <property type="project" value="UniProtKB-UniRule"/>
</dbReference>
<dbReference type="GO" id="GO:0006071">
    <property type="term" value="P:glycerol metabolic process"/>
    <property type="evidence" value="ECO:0007669"/>
    <property type="project" value="UniProtKB-UniRule"/>
</dbReference>
<dbReference type="CDD" id="cd01444">
    <property type="entry name" value="GlpE_ST"/>
    <property type="match status" value="1"/>
</dbReference>
<dbReference type="Gene3D" id="3.40.250.10">
    <property type="entry name" value="Rhodanese-like domain"/>
    <property type="match status" value="1"/>
</dbReference>
<dbReference type="HAMAP" id="MF_01009">
    <property type="entry name" value="Thiosulf_sulfurtr"/>
    <property type="match status" value="1"/>
</dbReference>
<dbReference type="InterPro" id="IPR050229">
    <property type="entry name" value="GlpE_sulfurtransferase"/>
</dbReference>
<dbReference type="InterPro" id="IPR001763">
    <property type="entry name" value="Rhodanese-like_dom"/>
</dbReference>
<dbReference type="InterPro" id="IPR036873">
    <property type="entry name" value="Rhodanese-like_dom_sf"/>
</dbReference>
<dbReference type="InterPro" id="IPR023695">
    <property type="entry name" value="Thiosulf_sulfurTrfase"/>
</dbReference>
<dbReference type="NCBIfam" id="NF001195">
    <property type="entry name" value="PRK00162.1"/>
    <property type="match status" value="1"/>
</dbReference>
<dbReference type="PANTHER" id="PTHR43031">
    <property type="entry name" value="FAD-DEPENDENT OXIDOREDUCTASE"/>
    <property type="match status" value="1"/>
</dbReference>
<dbReference type="PANTHER" id="PTHR43031:SF6">
    <property type="entry name" value="THIOSULFATE SULFURTRANSFERASE GLPE"/>
    <property type="match status" value="1"/>
</dbReference>
<dbReference type="Pfam" id="PF00581">
    <property type="entry name" value="Rhodanese"/>
    <property type="match status" value="1"/>
</dbReference>
<dbReference type="SMART" id="SM00450">
    <property type="entry name" value="RHOD"/>
    <property type="match status" value="1"/>
</dbReference>
<dbReference type="SUPFAM" id="SSF52821">
    <property type="entry name" value="Rhodanese/Cell cycle control phosphatase"/>
    <property type="match status" value="1"/>
</dbReference>
<dbReference type="PROSITE" id="PS50206">
    <property type="entry name" value="RHODANESE_3"/>
    <property type="match status" value="1"/>
</dbReference>
<keyword id="KW-0963">Cytoplasm</keyword>
<keyword id="KW-0808">Transferase</keyword>
<accession>B7V4H5</accession>
<reference key="1">
    <citation type="journal article" date="2009" name="Genome Res.">
        <title>Newly introduced genomic prophage islands are critical determinants of in vivo competitiveness in the Liverpool epidemic strain of Pseudomonas aeruginosa.</title>
        <authorList>
            <person name="Winstanley C."/>
            <person name="Langille M.G.I."/>
            <person name="Fothergill J.L."/>
            <person name="Kukavica-Ibrulj I."/>
            <person name="Paradis-Bleau C."/>
            <person name="Sanschagrin F."/>
            <person name="Thomson N.R."/>
            <person name="Winsor G.L."/>
            <person name="Quail M.A."/>
            <person name="Lennard N."/>
            <person name="Bignell A."/>
            <person name="Clarke L."/>
            <person name="Seeger K."/>
            <person name="Saunders D."/>
            <person name="Harris D."/>
            <person name="Parkhill J."/>
            <person name="Hancock R.E.W."/>
            <person name="Brinkman F.S.L."/>
            <person name="Levesque R.C."/>
        </authorList>
    </citation>
    <scope>NUCLEOTIDE SEQUENCE [LARGE SCALE GENOMIC DNA]</scope>
    <source>
        <strain>LESB58</strain>
    </source>
</reference>
<organism>
    <name type="scientific">Pseudomonas aeruginosa (strain LESB58)</name>
    <dbReference type="NCBI Taxonomy" id="557722"/>
    <lineage>
        <taxon>Bacteria</taxon>
        <taxon>Pseudomonadati</taxon>
        <taxon>Pseudomonadota</taxon>
        <taxon>Gammaproteobacteria</taxon>
        <taxon>Pseudomonadales</taxon>
        <taxon>Pseudomonadaceae</taxon>
        <taxon>Pseudomonas</taxon>
    </lineage>
</organism>
<name>GLPE_PSEA8</name>
<protein>
    <recommendedName>
        <fullName evidence="1">Thiosulfate sulfurtransferase GlpE</fullName>
        <ecNumber evidence="1">2.8.1.1</ecNumber>
    </recommendedName>
</protein>
<evidence type="ECO:0000255" key="1">
    <source>
        <dbReference type="HAMAP-Rule" id="MF_01009"/>
    </source>
</evidence>
<sequence>MSDTFQRIAPEQARQLRENGAQVVDIRDPQSFAVGHISGSRHIDNHSVADFIAAADLDAPLVVVCYHGNSSQSAAAYFIQQGFSDVYSLDGGFELWRSVYPADTSSGEAE</sequence>